<name>SYC_FRATO</name>
<accession>Q0BKI3</accession>
<evidence type="ECO:0000255" key="1">
    <source>
        <dbReference type="HAMAP-Rule" id="MF_00041"/>
    </source>
</evidence>
<gene>
    <name evidence="1" type="primary">cysS</name>
    <name type="ordered locus">FTH_1622</name>
</gene>
<dbReference type="EC" id="6.1.1.16" evidence="1"/>
<dbReference type="EMBL" id="CP000437">
    <property type="protein sequence ID" value="ABI83401.1"/>
    <property type="molecule type" value="Genomic_DNA"/>
</dbReference>
<dbReference type="RefSeq" id="WP_003017134.1">
    <property type="nucleotide sequence ID" value="NC_017463.1"/>
</dbReference>
<dbReference type="SMR" id="Q0BKI3"/>
<dbReference type="GeneID" id="75264190"/>
<dbReference type="KEGG" id="fth:FTH_1622"/>
<dbReference type="GO" id="GO:0005829">
    <property type="term" value="C:cytosol"/>
    <property type="evidence" value="ECO:0007669"/>
    <property type="project" value="TreeGrafter"/>
</dbReference>
<dbReference type="GO" id="GO:0005524">
    <property type="term" value="F:ATP binding"/>
    <property type="evidence" value="ECO:0007669"/>
    <property type="project" value="UniProtKB-UniRule"/>
</dbReference>
<dbReference type="GO" id="GO:0004817">
    <property type="term" value="F:cysteine-tRNA ligase activity"/>
    <property type="evidence" value="ECO:0007669"/>
    <property type="project" value="UniProtKB-UniRule"/>
</dbReference>
<dbReference type="GO" id="GO:0008270">
    <property type="term" value="F:zinc ion binding"/>
    <property type="evidence" value="ECO:0007669"/>
    <property type="project" value="UniProtKB-UniRule"/>
</dbReference>
<dbReference type="GO" id="GO:0006423">
    <property type="term" value="P:cysteinyl-tRNA aminoacylation"/>
    <property type="evidence" value="ECO:0007669"/>
    <property type="project" value="UniProtKB-UniRule"/>
</dbReference>
<dbReference type="CDD" id="cd07963">
    <property type="entry name" value="Anticodon_Ia_Cys"/>
    <property type="match status" value="1"/>
</dbReference>
<dbReference type="CDD" id="cd00672">
    <property type="entry name" value="CysRS_core"/>
    <property type="match status" value="1"/>
</dbReference>
<dbReference type="FunFam" id="3.40.50.620:FF:000009">
    <property type="entry name" value="Cysteine--tRNA ligase"/>
    <property type="match status" value="1"/>
</dbReference>
<dbReference type="Gene3D" id="1.20.120.1910">
    <property type="entry name" value="Cysteine-tRNA ligase, C-terminal anti-codon recognition domain"/>
    <property type="match status" value="1"/>
</dbReference>
<dbReference type="Gene3D" id="3.40.50.620">
    <property type="entry name" value="HUPs"/>
    <property type="match status" value="1"/>
</dbReference>
<dbReference type="HAMAP" id="MF_00041">
    <property type="entry name" value="Cys_tRNA_synth"/>
    <property type="match status" value="1"/>
</dbReference>
<dbReference type="InterPro" id="IPR015803">
    <property type="entry name" value="Cys-tRNA-ligase"/>
</dbReference>
<dbReference type="InterPro" id="IPR015273">
    <property type="entry name" value="Cys-tRNA-synt_Ia_DALR"/>
</dbReference>
<dbReference type="InterPro" id="IPR024909">
    <property type="entry name" value="Cys-tRNA/MSH_ligase"/>
</dbReference>
<dbReference type="InterPro" id="IPR056411">
    <property type="entry name" value="CysS_C"/>
</dbReference>
<dbReference type="InterPro" id="IPR014729">
    <property type="entry name" value="Rossmann-like_a/b/a_fold"/>
</dbReference>
<dbReference type="InterPro" id="IPR032678">
    <property type="entry name" value="tRNA-synt_1_cat_dom"/>
</dbReference>
<dbReference type="InterPro" id="IPR009080">
    <property type="entry name" value="tRNAsynth_Ia_anticodon-bd"/>
</dbReference>
<dbReference type="NCBIfam" id="TIGR00435">
    <property type="entry name" value="cysS"/>
    <property type="match status" value="1"/>
</dbReference>
<dbReference type="PANTHER" id="PTHR10890:SF3">
    <property type="entry name" value="CYSTEINE--TRNA LIGASE, CYTOPLASMIC"/>
    <property type="match status" value="1"/>
</dbReference>
<dbReference type="PANTHER" id="PTHR10890">
    <property type="entry name" value="CYSTEINYL-TRNA SYNTHETASE"/>
    <property type="match status" value="1"/>
</dbReference>
<dbReference type="Pfam" id="PF23493">
    <property type="entry name" value="CysS_C"/>
    <property type="match status" value="1"/>
</dbReference>
<dbReference type="Pfam" id="PF09190">
    <property type="entry name" value="DALR_2"/>
    <property type="match status" value="1"/>
</dbReference>
<dbReference type="Pfam" id="PF01406">
    <property type="entry name" value="tRNA-synt_1e"/>
    <property type="match status" value="1"/>
</dbReference>
<dbReference type="PRINTS" id="PR00983">
    <property type="entry name" value="TRNASYNTHCYS"/>
</dbReference>
<dbReference type="SMART" id="SM00840">
    <property type="entry name" value="DALR_2"/>
    <property type="match status" value="1"/>
</dbReference>
<dbReference type="SUPFAM" id="SSF47323">
    <property type="entry name" value="Anticodon-binding domain of a subclass of class I aminoacyl-tRNA synthetases"/>
    <property type="match status" value="1"/>
</dbReference>
<dbReference type="SUPFAM" id="SSF52374">
    <property type="entry name" value="Nucleotidylyl transferase"/>
    <property type="match status" value="1"/>
</dbReference>
<sequence>MDFCFMIFYNSLSGQKEQFKPIEANKIKMYACGVTVYDDCHIGHARTYIAFDVINRYFKYRGYDVTLVRNITDIDDKIIKRANENGESTTELVERNIKAMHDVFARLNILKPSKEPRATETIPEMVAMIETLIKKGYAYQGANGDVFYRVTKFADYGKLSKQNLEALQQGSRVDVVEEKENPMDFVLWKMAKEGEPAWDSPWGAGRPGWHIECSAMSKKLLGDTFDIHAGGSDLRFPHHENEIAQSEACNECTFANYWLHSGMVKVNAEKMSKSLNNFFTIVEVLEEYHPEVVRYFLASTVYRSEINYSKENLENAKASVERLFNALRDIEPIEVNLPDDASEYEEKFIKAMDNDFNTPEALAVLFSLAKEINTLKTTNKYKASGYAYLLRKLCDVLGILFTDIEEYFKQGDGADASEIEKLIAERTQAKKDKNYARADEIRNQLQQQGIILEDSATGTTWKKG</sequence>
<comment type="catalytic activity">
    <reaction evidence="1">
        <text>tRNA(Cys) + L-cysteine + ATP = L-cysteinyl-tRNA(Cys) + AMP + diphosphate</text>
        <dbReference type="Rhea" id="RHEA:17773"/>
        <dbReference type="Rhea" id="RHEA-COMP:9661"/>
        <dbReference type="Rhea" id="RHEA-COMP:9679"/>
        <dbReference type="ChEBI" id="CHEBI:30616"/>
        <dbReference type="ChEBI" id="CHEBI:33019"/>
        <dbReference type="ChEBI" id="CHEBI:35235"/>
        <dbReference type="ChEBI" id="CHEBI:78442"/>
        <dbReference type="ChEBI" id="CHEBI:78517"/>
        <dbReference type="ChEBI" id="CHEBI:456215"/>
        <dbReference type="EC" id="6.1.1.16"/>
    </reaction>
</comment>
<comment type="cofactor">
    <cofactor evidence="1">
        <name>Zn(2+)</name>
        <dbReference type="ChEBI" id="CHEBI:29105"/>
    </cofactor>
    <text evidence="1">Binds 1 zinc ion per subunit.</text>
</comment>
<comment type="subunit">
    <text evidence="1">Monomer.</text>
</comment>
<comment type="subcellular location">
    <subcellularLocation>
        <location evidence="1">Cytoplasm</location>
    </subcellularLocation>
</comment>
<comment type="similarity">
    <text evidence="1">Belongs to the class-I aminoacyl-tRNA synthetase family.</text>
</comment>
<proteinExistence type="inferred from homology"/>
<protein>
    <recommendedName>
        <fullName evidence="1">Cysteine--tRNA ligase</fullName>
        <ecNumber evidence="1">6.1.1.16</ecNumber>
    </recommendedName>
    <alternativeName>
        <fullName evidence="1">Cysteinyl-tRNA synthetase</fullName>
        <shortName evidence="1">CysRS</shortName>
    </alternativeName>
</protein>
<keyword id="KW-0030">Aminoacyl-tRNA synthetase</keyword>
<keyword id="KW-0067">ATP-binding</keyword>
<keyword id="KW-0963">Cytoplasm</keyword>
<keyword id="KW-0436">Ligase</keyword>
<keyword id="KW-0479">Metal-binding</keyword>
<keyword id="KW-0547">Nucleotide-binding</keyword>
<keyword id="KW-0648">Protein biosynthesis</keyword>
<keyword id="KW-0862">Zinc</keyword>
<reference key="1">
    <citation type="journal article" date="2006" name="J. Bacteriol.">
        <title>Chromosome rearrangement and diversification of Francisella tularensis revealed by the type B (OSU18) genome sequence.</title>
        <authorList>
            <person name="Petrosino J.F."/>
            <person name="Xiang Q."/>
            <person name="Karpathy S.E."/>
            <person name="Jiang H."/>
            <person name="Yerrapragada S."/>
            <person name="Liu Y."/>
            <person name="Gioia J."/>
            <person name="Hemphill L."/>
            <person name="Gonzalez A."/>
            <person name="Raghavan T.M."/>
            <person name="Uzman A."/>
            <person name="Fox G.E."/>
            <person name="Highlander S."/>
            <person name="Reichard M."/>
            <person name="Morton R.J."/>
            <person name="Clinkenbeard K.D."/>
            <person name="Weinstock G.M."/>
        </authorList>
    </citation>
    <scope>NUCLEOTIDE SEQUENCE [LARGE SCALE GENOMIC DNA]</scope>
    <source>
        <strain>OSU18</strain>
    </source>
</reference>
<organism>
    <name type="scientific">Francisella tularensis subsp. holarctica (strain OSU18)</name>
    <dbReference type="NCBI Taxonomy" id="393011"/>
    <lineage>
        <taxon>Bacteria</taxon>
        <taxon>Pseudomonadati</taxon>
        <taxon>Pseudomonadota</taxon>
        <taxon>Gammaproteobacteria</taxon>
        <taxon>Thiotrichales</taxon>
        <taxon>Francisellaceae</taxon>
        <taxon>Francisella</taxon>
    </lineage>
</organism>
<feature type="chain" id="PRO_0000332827" description="Cysteine--tRNA ligase">
    <location>
        <begin position="1"/>
        <end position="464"/>
    </location>
</feature>
<feature type="short sequence motif" description="'HIGH' region">
    <location>
        <begin position="34"/>
        <end position="44"/>
    </location>
</feature>
<feature type="short sequence motif" description="'KMSKS' region">
    <location>
        <begin position="270"/>
        <end position="274"/>
    </location>
</feature>
<feature type="binding site" evidence="1">
    <location>
        <position position="32"/>
    </location>
    <ligand>
        <name>Zn(2+)</name>
        <dbReference type="ChEBI" id="CHEBI:29105"/>
    </ligand>
</feature>
<feature type="binding site" evidence="1">
    <location>
        <position position="213"/>
    </location>
    <ligand>
        <name>Zn(2+)</name>
        <dbReference type="ChEBI" id="CHEBI:29105"/>
    </ligand>
</feature>
<feature type="binding site" evidence="1">
    <location>
        <position position="238"/>
    </location>
    <ligand>
        <name>Zn(2+)</name>
        <dbReference type="ChEBI" id="CHEBI:29105"/>
    </ligand>
</feature>
<feature type="binding site" evidence="1">
    <location>
        <position position="242"/>
    </location>
    <ligand>
        <name>Zn(2+)</name>
        <dbReference type="ChEBI" id="CHEBI:29105"/>
    </ligand>
</feature>
<feature type="binding site" evidence="1">
    <location>
        <position position="273"/>
    </location>
    <ligand>
        <name>ATP</name>
        <dbReference type="ChEBI" id="CHEBI:30616"/>
    </ligand>
</feature>